<feature type="chain" id="PRO_1000047826" description="Probable septum site-determining protein MinC">
    <location>
        <begin position="1"/>
        <end position="239"/>
    </location>
</feature>
<keyword id="KW-0131">Cell cycle</keyword>
<keyword id="KW-0132">Cell division</keyword>
<keyword id="KW-0717">Septation</keyword>
<name>MINC_COLP3</name>
<evidence type="ECO:0000255" key="1">
    <source>
        <dbReference type="HAMAP-Rule" id="MF_00267"/>
    </source>
</evidence>
<proteinExistence type="inferred from homology"/>
<gene>
    <name evidence="1" type="primary">minC</name>
    <name type="ordered locus">CPS_2581</name>
</gene>
<dbReference type="EMBL" id="CP000083">
    <property type="protein sequence ID" value="AAZ25120.1"/>
    <property type="molecule type" value="Genomic_DNA"/>
</dbReference>
<dbReference type="RefSeq" id="WP_011043390.1">
    <property type="nucleotide sequence ID" value="NC_003910.7"/>
</dbReference>
<dbReference type="SMR" id="Q481H3"/>
<dbReference type="STRING" id="167879.CPS_2581"/>
<dbReference type="KEGG" id="cps:CPS_2581"/>
<dbReference type="HOGENOM" id="CLU_067812_0_1_6"/>
<dbReference type="Proteomes" id="UP000000547">
    <property type="component" value="Chromosome"/>
</dbReference>
<dbReference type="GO" id="GO:0000902">
    <property type="term" value="P:cell morphogenesis"/>
    <property type="evidence" value="ECO:0007669"/>
    <property type="project" value="InterPro"/>
</dbReference>
<dbReference type="GO" id="GO:0000917">
    <property type="term" value="P:division septum assembly"/>
    <property type="evidence" value="ECO:0007669"/>
    <property type="project" value="UniProtKB-KW"/>
</dbReference>
<dbReference type="GO" id="GO:0051302">
    <property type="term" value="P:regulation of cell division"/>
    <property type="evidence" value="ECO:0007669"/>
    <property type="project" value="InterPro"/>
</dbReference>
<dbReference type="GO" id="GO:1901891">
    <property type="term" value="P:regulation of cell septum assembly"/>
    <property type="evidence" value="ECO:0007669"/>
    <property type="project" value="InterPro"/>
</dbReference>
<dbReference type="Gene3D" id="2.160.20.70">
    <property type="match status" value="1"/>
</dbReference>
<dbReference type="Gene3D" id="3.30.70.260">
    <property type="match status" value="1"/>
</dbReference>
<dbReference type="HAMAP" id="MF_00267">
    <property type="entry name" value="MinC"/>
    <property type="match status" value="1"/>
</dbReference>
<dbReference type="InterPro" id="IPR016098">
    <property type="entry name" value="CAP/MinC_C"/>
</dbReference>
<dbReference type="InterPro" id="IPR013033">
    <property type="entry name" value="MinC"/>
</dbReference>
<dbReference type="InterPro" id="IPR036145">
    <property type="entry name" value="MinC_C_sf"/>
</dbReference>
<dbReference type="InterPro" id="IPR007874">
    <property type="entry name" value="MinC_N"/>
</dbReference>
<dbReference type="InterPro" id="IPR005526">
    <property type="entry name" value="Septum_form_inhib_MinC_C"/>
</dbReference>
<dbReference type="NCBIfam" id="TIGR01222">
    <property type="entry name" value="minC"/>
    <property type="match status" value="1"/>
</dbReference>
<dbReference type="PANTHER" id="PTHR34108">
    <property type="entry name" value="SEPTUM SITE-DETERMINING PROTEIN MINC"/>
    <property type="match status" value="1"/>
</dbReference>
<dbReference type="PANTHER" id="PTHR34108:SF1">
    <property type="entry name" value="SEPTUM SITE-DETERMINING PROTEIN MINC"/>
    <property type="match status" value="1"/>
</dbReference>
<dbReference type="Pfam" id="PF03775">
    <property type="entry name" value="MinC_C"/>
    <property type="match status" value="1"/>
</dbReference>
<dbReference type="Pfam" id="PF05209">
    <property type="entry name" value="MinC_N"/>
    <property type="match status" value="1"/>
</dbReference>
<dbReference type="SUPFAM" id="SSF63848">
    <property type="entry name" value="Cell-division inhibitor MinC, C-terminal domain"/>
    <property type="match status" value="1"/>
</dbReference>
<reference key="1">
    <citation type="journal article" date="2005" name="Proc. Natl. Acad. Sci. U.S.A.">
        <title>The psychrophilic lifestyle as revealed by the genome sequence of Colwellia psychrerythraea 34H through genomic and proteomic analyses.</title>
        <authorList>
            <person name="Methe B.A."/>
            <person name="Nelson K.E."/>
            <person name="Deming J.W."/>
            <person name="Momen B."/>
            <person name="Melamud E."/>
            <person name="Zhang X."/>
            <person name="Moult J."/>
            <person name="Madupu R."/>
            <person name="Nelson W.C."/>
            <person name="Dodson R.J."/>
            <person name="Brinkac L.M."/>
            <person name="Daugherty S.C."/>
            <person name="Durkin A.S."/>
            <person name="DeBoy R.T."/>
            <person name="Kolonay J.F."/>
            <person name="Sullivan S.A."/>
            <person name="Zhou L."/>
            <person name="Davidsen T.M."/>
            <person name="Wu M."/>
            <person name="Huston A.L."/>
            <person name="Lewis M."/>
            <person name="Weaver B."/>
            <person name="Weidman J.F."/>
            <person name="Khouri H."/>
            <person name="Utterback T.R."/>
            <person name="Feldblyum T.V."/>
            <person name="Fraser C.M."/>
        </authorList>
    </citation>
    <scope>NUCLEOTIDE SEQUENCE [LARGE SCALE GENOMIC DNA]</scope>
    <source>
        <strain>34H / ATCC BAA-681</strain>
    </source>
</reference>
<comment type="function">
    <text evidence="1">Cell division inhibitor that blocks the formation of polar Z ring septums. Rapidly oscillates between the poles of the cell to destabilize FtsZ filaments that have formed before they mature into polar Z rings. Prevents FtsZ polymerization.</text>
</comment>
<comment type="subunit">
    <text evidence="1">Interacts with MinD and FtsZ.</text>
</comment>
<comment type="similarity">
    <text evidence="1">Belongs to the MinC family.</text>
</comment>
<sequence length="239" mass="26298">MADASIEFKGTSFTLSVLHLKTSKLADIRADLVKKVAQAPDFFYLVPVVVNIEQLDCSIDYQAVKTLIEEFNFTFVGFTGSVDKEQRKLIRELGFSFVNTTRVDTSQKAAIAEKAIVAESKVTAAIPECNLYTDKVHRGQIRSGQQIYAKDQNLVVIGSVSAGAEVIADGNIHVYGSLRGRAIAGAKGHHKAQIYCQNLEAELVSINGNYWLSESMEQHWGSPVYIHLTDSELTSSKLI</sequence>
<protein>
    <recommendedName>
        <fullName evidence="1">Probable septum site-determining protein MinC</fullName>
    </recommendedName>
</protein>
<organism>
    <name type="scientific">Colwellia psychrerythraea (strain 34H / ATCC BAA-681)</name>
    <name type="common">Vibrio psychroerythus</name>
    <dbReference type="NCBI Taxonomy" id="167879"/>
    <lineage>
        <taxon>Bacteria</taxon>
        <taxon>Pseudomonadati</taxon>
        <taxon>Pseudomonadota</taxon>
        <taxon>Gammaproteobacteria</taxon>
        <taxon>Alteromonadales</taxon>
        <taxon>Colwelliaceae</taxon>
        <taxon>Colwellia</taxon>
    </lineage>
</organism>
<accession>Q481H3</accession>